<reference key="1">
    <citation type="journal article" date="2007" name="Genome Biol.">
        <title>Characterization and modeling of the Haemophilus influenzae core and supragenomes based on the complete genomic sequences of Rd and 12 clinical nontypeable strains.</title>
        <authorList>
            <person name="Hogg J.S."/>
            <person name="Hu F.Z."/>
            <person name="Janto B."/>
            <person name="Boissy R."/>
            <person name="Hayes J."/>
            <person name="Keefe R."/>
            <person name="Post J.C."/>
            <person name="Ehrlich G.D."/>
        </authorList>
    </citation>
    <scope>NUCLEOTIDE SEQUENCE [LARGE SCALE GENOMIC DNA]</scope>
    <source>
        <strain>PittGG</strain>
    </source>
</reference>
<organism>
    <name type="scientific">Haemophilus influenzae (strain PittGG)</name>
    <dbReference type="NCBI Taxonomy" id="374931"/>
    <lineage>
        <taxon>Bacteria</taxon>
        <taxon>Pseudomonadati</taxon>
        <taxon>Pseudomonadota</taxon>
        <taxon>Gammaproteobacteria</taxon>
        <taxon>Pasteurellales</taxon>
        <taxon>Pasteurellaceae</taxon>
        <taxon>Haemophilus</taxon>
    </lineage>
</organism>
<gene>
    <name evidence="1" type="primary">rpmD</name>
    <name type="ordered locus">CGSHiGG_07480</name>
</gene>
<sequence length="59" mass="6678">MAKTIKVTQVRSSIARLPKHKATLRGLGLRHMHHTVELIDTPAVRGMINQVSYMVKVEE</sequence>
<accession>A5UHU9</accession>
<evidence type="ECO:0000255" key="1">
    <source>
        <dbReference type="HAMAP-Rule" id="MF_01371"/>
    </source>
</evidence>
<evidence type="ECO:0000305" key="2"/>
<name>RL30_HAEIG</name>
<proteinExistence type="inferred from homology"/>
<comment type="subunit">
    <text evidence="1">Part of the 50S ribosomal subunit.</text>
</comment>
<comment type="similarity">
    <text evidence="1">Belongs to the universal ribosomal protein uL30 family.</text>
</comment>
<feature type="chain" id="PRO_1000056048" description="Large ribosomal subunit protein uL30">
    <location>
        <begin position="1"/>
        <end position="59"/>
    </location>
</feature>
<dbReference type="EMBL" id="CP000672">
    <property type="protein sequence ID" value="ABR00355.1"/>
    <property type="molecule type" value="Genomic_DNA"/>
</dbReference>
<dbReference type="SMR" id="A5UHU9"/>
<dbReference type="KEGG" id="hiq:CGSHiGG_07480"/>
<dbReference type="HOGENOM" id="CLU_131047_1_4_6"/>
<dbReference type="Proteomes" id="UP000001990">
    <property type="component" value="Chromosome"/>
</dbReference>
<dbReference type="GO" id="GO:0022625">
    <property type="term" value="C:cytosolic large ribosomal subunit"/>
    <property type="evidence" value="ECO:0007669"/>
    <property type="project" value="TreeGrafter"/>
</dbReference>
<dbReference type="GO" id="GO:0003735">
    <property type="term" value="F:structural constituent of ribosome"/>
    <property type="evidence" value="ECO:0007669"/>
    <property type="project" value="InterPro"/>
</dbReference>
<dbReference type="GO" id="GO:0006412">
    <property type="term" value="P:translation"/>
    <property type="evidence" value="ECO:0007669"/>
    <property type="project" value="UniProtKB-UniRule"/>
</dbReference>
<dbReference type="CDD" id="cd01658">
    <property type="entry name" value="Ribosomal_L30"/>
    <property type="match status" value="1"/>
</dbReference>
<dbReference type="FunFam" id="3.30.1390.20:FF:000001">
    <property type="entry name" value="50S ribosomal protein L30"/>
    <property type="match status" value="1"/>
</dbReference>
<dbReference type="Gene3D" id="3.30.1390.20">
    <property type="entry name" value="Ribosomal protein L30, ferredoxin-like fold domain"/>
    <property type="match status" value="1"/>
</dbReference>
<dbReference type="HAMAP" id="MF_01371_B">
    <property type="entry name" value="Ribosomal_uL30_B"/>
    <property type="match status" value="1"/>
</dbReference>
<dbReference type="InterPro" id="IPR036919">
    <property type="entry name" value="Ribo_uL30_ferredoxin-like_sf"/>
</dbReference>
<dbReference type="InterPro" id="IPR005996">
    <property type="entry name" value="Ribosomal_uL30_bac-type"/>
</dbReference>
<dbReference type="InterPro" id="IPR018038">
    <property type="entry name" value="Ribosomal_uL30_CS"/>
</dbReference>
<dbReference type="InterPro" id="IPR016082">
    <property type="entry name" value="Ribosomal_uL30_ferredoxin-like"/>
</dbReference>
<dbReference type="NCBIfam" id="TIGR01308">
    <property type="entry name" value="rpmD_bact"/>
    <property type="match status" value="1"/>
</dbReference>
<dbReference type="PANTHER" id="PTHR15892:SF2">
    <property type="entry name" value="LARGE RIBOSOMAL SUBUNIT PROTEIN UL30M"/>
    <property type="match status" value="1"/>
</dbReference>
<dbReference type="PANTHER" id="PTHR15892">
    <property type="entry name" value="MITOCHONDRIAL RIBOSOMAL PROTEIN L30"/>
    <property type="match status" value="1"/>
</dbReference>
<dbReference type="Pfam" id="PF00327">
    <property type="entry name" value="Ribosomal_L30"/>
    <property type="match status" value="1"/>
</dbReference>
<dbReference type="PIRSF" id="PIRSF002211">
    <property type="entry name" value="Ribosomal_L30_bac-type"/>
    <property type="match status" value="1"/>
</dbReference>
<dbReference type="SUPFAM" id="SSF55129">
    <property type="entry name" value="Ribosomal protein L30p/L7e"/>
    <property type="match status" value="1"/>
</dbReference>
<dbReference type="PROSITE" id="PS00634">
    <property type="entry name" value="RIBOSOMAL_L30"/>
    <property type="match status" value="1"/>
</dbReference>
<keyword id="KW-0687">Ribonucleoprotein</keyword>
<keyword id="KW-0689">Ribosomal protein</keyword>
<protein>
    <recommendedName>
        <fullName evidence="1">Large ribosomal subunit protein uL30</fullName>
    </recommendedName>
    <alternativeName>
        <fullName evidence="2">50S ribosomal protein L30</fullName>
    </alternativeName>
</protein>